<protein>
    <recommendedName>
        <fullName evidence="1">tRNA-specific 2-thiouridylase MnmA</fullName>
        <ecNumber evidence="1">2.8.1.13</ecNumber>
    </recommendedName>
</protein>
<sequence length="390" mass="44016">MLKTLKDKKLENCSSINNKSKKQKHIVVGLSGGVDSSLSAALLMEDGWKVEGLTLWLMKGEGSCCSEGLVDAAGLCEDLGIQHNILDSRVIFEREVIKKTTEGYESGYTPLPCSMCNKNVKFEEMLKFVIKQKEFTYIATGHYARVIKSSCEHINNSENFQFKDFLLLRGADRNKDQSYFLYSLSQEVLSRLILPLGDLKKEETRKEALRLGLRTAKKPESQDLCLVEHYGSMQKFIDNHVKTKNGEIKHINGKTLGTHNGIQHFTIGQRKGLGIAWPEPLYVESLDKQKNIVYVANKNDLLKREAIIKEVNWVSIEAPIKEIEVEAQIRYRSEPVKGILVPLKSKDNLTKRFKLIFEDNQSSVTPGQAAVFYKGEILLGGGLISEFSKK</sequence>
<proteinExistence type="inferred from homology"/>
<name>MNMA_PROM5</name>
<comment type="function">
    <text evidence="1">Catalyzes the 2-thiolation of uridine at the wobble position (U34) of tRNA, leading to the formation of s(2)U34.</text>
</comment>
<comment type="catalytic activity">
    <reaction evidence="1">
        <text>S-sulfanyl-L-cysteinyl-[protein] + uridine(34) in tRNA + AH2 + ATP = 2-thiouridine(34) in tRNA + L-cysteinyl-[protein] + A + AMP + diphosphate + H(+)</text>
        <dbReference type="Rhea" id="RHEA:47032"/>
        <dbReference type="Rhea" id="RHEA-COMP:10131"/>
        <dbReference type="Rhea" id="RHEA-COMP:11726"/>
        <dbReference type="Rhea" id="RHEA-COMP:11727"/>
        <dbReference type="Rhea" id="RHEA-COMP:11728"/>
        <dbReference type="ChEBI" id="CHEBI:13193"/>
        <dbReference type="ChEBI" id="CHEBI:15378"/>
        <dbReference type="ChEBI" id="CHEBI:17499"/>
        <dbReference type="ChEBI" id="CHEBI:29950"/>
        <dbReference type="ChEBI" id="CHEBI:30616"/>
        <dbReference type="ChEBI" id="CHEBI:33019"/>
        <dbReference type="ChEBI" id="CHEBI:61963"/>
        <dbReference type="ChEBI" id="CHEBI:65315"/>
        <dbReference type="ChEBI" id="CHEBI:87170"/>
        <dbReference type="ChEBI" id="CHEBI:456215"/>
        <dbReference type="EC" id="2.8.1.13"/>
    </reaction>
</comment>
<comment type="subcellular location">
    <subcellularLocation>
        <location evidence="1">Cytoplasm</location>
    </subcellularLocation>
</comment>
<comment type="similarity">
    <text evidence="1">Belongs to the MnmA/TRMU family.</text>
</comment>
<accession>A2BXZ8</accession>
<gene>
    <name evidence="1" type="primary">mnmA</name>
    <name type="ordered locus">P9515_14521</name>
</gene>
<dbReference type="EC" id="2.8.1.13" evidence="1"/>
<dbReference type="EMBL" id="CP000552">
    <property type="protein sequence ID" value="ABM72659.1"/>
    <property type="molecule type" value="Genomic_DNA"/>
</dbReference>
<dbReference type="RefSeq" id="WP_011820756.1">
    <property type="nucleotide sequence ID" value="NC_008817.1"/>
</dbReference>
<dbReference type="SMR" id="A2BXZ8"/>
<dbReference type="STRING" id="167542.P9515_14521"/>
<dbReference type="GeneID" id="60200852"/>
<dbReference type="KEGG" id="pmc:P9515_14521"/>
<dbReference type="eggNOG" id="COG0482">
    <property type="taxonomic scope" value="Bacteria"/>
</dbReference>
<dbReference type="HOGENOM" id="CLU_035188_0_0_3"/>
<dbReference type="OrthoDB" id="9800696at2"/>
<dbReference type="Proteomes" id="UP000001589">
    <property type="component" value="Chromosome"/>
</dbReference>
<dbReference type="GO" id="GO:0005737">
    <property type="term" value="C:cytoplasm"/>
    <property type="evidence" value="ECO:0007669"/>
    <property type="project" value="UniProtKB-SubCell"/>
</dbReference>
<dbReference type="GO" id="GO:0005524">
    <property type="term" value="F:ATP binding"/>
    <property type="evidence" value="ECO:0007669"/>
    <property type="project" value="UniProtKB-KW"/>
</dbReference>
<dbReference type="GO" id="GO:0000049">
    <property type="term" value="F:tRNA binding"/>
    <property type="evidence" value="ECO:0007669"/>
    <property type="project" value="UniProtKB-KW"/>
</dbReference>
<dbReference type="GO" id="GO:0103016">
    <property type="term" value="F:tRNA-uridine 2-sulfurtransferase activity"/>
    <property type="evidence" value="ECO:0007669"/>
    <property type="project" value="UniProtKB-EC"/>
</dbReference>
<dbReference type="GO" id="GO:0002143">
    <property type="term" value="P:tRNA wobble position uridine thiolation"/>
    <property type="evidence" value="ECO:0007669"/>
    <property type="project" value="TreeGrafter"/>
</dbReference>
<dbReference type="CDD" id="cd01998">
    <property type="entry name" value="MnmA_TRMU-like"/>
    <property type="match status" value="1"/>
</dbReference>
<dbReference type="FunFam" id="2.30.30.280:FF:000001">
    <property type="entry name" value="tRNA-specific 2-thiouridylase MnmA"/>
    <property type="match status" value="1"/>
</dbReference>
<dbReference type="Gene3D" id="2.30.30.280">
    <property type="entry name" value="Adenine nucleotide alpha hydrolases-like domains"/>
    <property type="match status" value="1"/>
</dbReference>
<dbReference type="Gene3D" id="3.40.50.620">
    <property type="entry name" value="HUPs"/>
    <property type="match status" value="1"/>
</dbReference>
<dbReference type="Gene3D" id="2.40.30.10">
    <property type="entry name" value="Translation factors"/>
    <property type="match status" value="1"/>
</dbReference>
<dbReference type="HAMAP" id="MF_00144">
    <property type="entry name" value="tRNA_thiouridyl_MnmA"/>
    <property type="match status" value="1"/>
</dbReference>
<dbReference type="InterPro" id="IPR004506">
    <property type="entry name" value="MnmA-like"/>
</dbReference>
<dbReference type="InterPro" id="IPR046885">
    <property type="entry name" value="MnmA-like_C"/>
</dbReference>
<dbReference type="InterPro" id="IPR046884">
    <property type="entry name" value="MnmA-like_central"/>
</dbReference>
<dbReference type="InterPro" id="IPR023382">
    <property type="entry name" value="MnmA-like_central_sf"/>
</dbReference>
<dbReference type="InterPro" id="IPR014729">
    <property type="entry name" value="Rossmann-like_a/b/a_fold"/>
</dbReference>
<dbReference type="NCBIfam" id="NF001138">
    <property type="entry name" value="PRK00143.1"/>
    <property type="match status" value="1"/>
</dbReference>
<dbReference type="NCBIfam" id="TIGR00420">
    <property type="entry name" value="trmU"/>
    <property type="match status" value="1"/>
</dbReference>
<dbReference type="PANTHER" id="PTHR11933:SF5">
    <property type="entry name" value="MITOCHONDRIAL TRNA-SPECIFIC 2-THIOURIDYLASE 1"/>
    <property type="match status" value="1"/>
</dbReference>
<dbReference type="PANTHER" id="PTHR11933">
    <property type="entry name" value="TRNA 5-METHYLAMINOMETHYL-2-THIOURIDYLATE -METHYLTRANSFERASE"/>
    <property type="match status" value="1"/>
</dbReference>
<dbReference type="Pfam" id="PF03054">
    <property type="entry name" value="tRNA_Me_trans"/>
    <property type="match status" value="1"/>
</dbReference>
<dbReference type="Pfam" id="PF20258">
    <property type="entry name" value="tRNA_Me_trans_C"/>
    <property type="match status" value="1"/>
</dbReference>
<dbReference type="Pfam" id="PF20259">
    <property type="entry name" value="tRNA_Me_trans_M"/>
    <property type="match status" value="1"/>
</dbReference>
<dbReference type="SUPFAM" id="SSF52402">
    <property type="entry name" value="Adenine nucleotide alpha hydrolases-like"/>
    <property type="match status" value="1"/>
</dbReference>
<reference key="1">
    <citation type="journal article" date="2007" name="PLoS Genet.">
        <title>Patterns and implications of gene gain and loss in the evolution of Prochlorococcus.</title>
        <authorList>
            <person name="Kettler G.C."/>
            <person name="Martiny A.C."/>
            <person name="Huang K."/>
            <person name="Zucker J."/>
            <person name="Coleman M.L."/>
            <person name="Rodrigue S."/>
            <person name="Chen F."/>
            <person name="Lapidus A."/>
            <person name="Ferriera S."/>
            <person name="Johnson J."/>
            <person name="Steglich C."/>
            <person name="Church G.M."/>
            <person name="Richardson P."/>
            <person name="Chisholm S.W."/>
        </authorList>
    </citation>
    <scope>NUCLEOTIDE SEQUENCE [LARGE SCALE GENOMIC DNA]</scope>
    <source>
        <strain>MIT 9515</strain>
    </source>
</reference>
<organism>
    <name type="scientific">Prochlorococcus marinus (strain MIT 9515)</name>
    <dbReference type="NCBI Taxonomy" id="167542"/>
    <lineage>
        <taxon>Bacteria</taxon>
        <taxon>Bacillati</taxon>
        <taxon>Cyanobacteriota</taxon>
        <taxon>Cyanophyceae</taxon>
        <taxon>Synechococcales</taxon>
        <taxon>Prochlorococcaceae</taxon>
        <taxon>Prochlorococcus</taxon>
    </lineage>
</organism>
<keyword id="KW-0067">ATP-binding</keyword>
<keyword id="KW-0963">Cytoplasm</keyword>
<keyword id="KW-1015">Disulfide bond</keyword>
<keyword id="KW-0547">Nucleotide-binding</keyword>
<keyword id="KW-0694">RNA-binding</keyword>
<keyword id="KW-0808">Transferase</keyword>
<keyword id="KW-0819">tRNA processing</keyword>
<keyword id="KW-0820">tRNA-binding</keyword>
<feature type="chain" id="PRO_0000349750" description="tRNA-specific 2-thiouridylase MnmA">
    <location>
        <begin position="1"/>
        <end position="390"/>
    </location>
</feature>
<feature type="region of interest" description="Interaction with tRNA" evidence="1">
    <location>
        <begin position="175"/>
        <end position="177"/>
    </location>
</feature>
<feature type="region of interest" description="Interaction with tRNA" evidence="1">
    <location>
        <begin position="330"/>
        <end position="331"/>
    </location>
</feature>
<feature type="active site" description="Nucleophile" evidence="1">
    <location>
        <position position="116"/>
    </location>
</feature>
<feature type="active site" description="Cysteine persulfide intermediate" evidence="1">
    <location>
        <position position="225"/>
    </location>
</feature>
<feature type="binding site" evidence="1">
    <location>
        <begin position="29"/>
        <end position="36"/>
    </location>
    <ligand>
        <name>ATP</name>
        <dbReference type="ChEBI" id="CHEBI:30616"/>
    </ligand>
</feature>
<feature type="binding site" evidence="1">
    <location>
        <position position="55"/>
    </location>
    <ligand>
        <name>ATP</name>
        <dbReference type="ChEBI" id="CHEBI:30616"/>
    </ligand>
</feature>
<feature type="binding site" evidence="1">
    <location>
        <position position="141"/>
    </location>
    <ligand>
        <name>ATP</name>
        <dbReference type="ChEBI" id="CHEBI:30616"/>
    </ligand>
</feature>
<feature type="site" description="Interaction with tRNA" evidence="1">
    <location>
        <position position="142"/>
    </location>
</feature>
<feature type="site" description="Interaction with tRNA" evidence="1">
    <location>
        <position position="368"/>
    </location>
</feature>
<feature type="disulfide bond" description="Alternate" evidence="1">
    <location>
        <begin position="116"/>
        <end position="225"/>
    </location>
</feature>
<evidence type="ECO:0000255" key="1">
    <source>
        <dbReference type="HAMAP-Rule" id="MF_00144"/>
    </source>
</evidence>